<organism>
    <name type="scientific">Arabidopsis thaliana</name>
    <name type="common">Mouse-ear cress</name>
    <dbReference type="NCBI Taxonomy" id="3702"/>
    <lineage>
        <taxon>Eukaryota</taxon>
        <taxon>Viridiplantae</taxon>
        <taxon>Streptophyta</taxon>
        <taxon>Embryophyta</taxon>
        <taxon>Tracheophyta</taxon>
        <taxon>Spermatophyta</taxon>
        <taxon>Magnoliopsida</taxon>
        <taxon>eudicotyledons</taxon>
        <taxon>Gunneridae</taxon>
        <taxon>Pentapetalae</taxon>
        <taxon>rosids</taxon>
        <taxon>malvids</taxon>
        <taxon>Brassicales</taxon>
        <taxon>Brassicaceae</taxon>
        <taxon>Camelineae</taxon>
        <taxon>Arabidopsis</taxon>
    </lineage>
</organism>
<comment type="function">
    <text evidence="9 10 11 14 16 17 24 25">Acts as a calcium sensor involved in the signaling pathway during growth and development and in response to abiotic stresses. May function as a positive regulator of salt and drought responses and as a negative regulator of cold response. Contributes to the regulation of early stress-related CBF/DREB transcription factors. CBL proteins interact with CIPK serine-threonine protein kinases. Binding of a CBL protein to the regulatory NAF domain of a CIPK protein lead to the activation of the kinase in a calcium-dependent manner. Mediates the activation of AKT1 by CIPK proteins (CIPK6, CIPK16, and CIPK23) in response to low potassium conditions and in the context of stomatal movement. Involved in response to glucose and gibberellin during germination and seedling development and in response to cold stress. Involved in the calcium-dependent regulation by CIPK26 of reactive oxygen species production by the NADPH oxidase RBOHF.</text>
</comment>
<comment type="subunit">
    <text evidence="1 5 6 7 9 12 13 14 15 16 17 18 19 20 21 22 23 24 25">Homodimer (By similarity). Part of a K(+)-channel calcium-sensing kinase/phosphatase complex composed by a calcium sensor CBL (CBL1, CBL2, CBL3 or CBL9), a kinase CIPK (CIPK6, CIPK16 or CIPK23), a phosphatase PP2C (AIP1) and a K(+)-channel (AKT1). Interacts with PP2CA, CIPK1, CIPK6, CIPK7, CIPK8, CIPK11, CIPK15/PKS3, CIPK16, CIPK17, CIPK18, CIPK23, CIPK24 and CIPK26. Binds to PI4KB1 and to KINB1.</text>
</comment>
<comment type="interaction">
    <interactant intactId="EBI-974530">
        <id>O81445</id>
    </interactant>
    <interactant intactId="EBI-1748677">
        <id>Q8RWC9</id>
        <label>CIPK1</label>
    </interactant>
    <organismsDiffer>false</organismsDiffer>
    <experiments>10</experiments>
</comment>
<comment type="interaction">
    <interactant intactId="EBI-974530">
        <id>O81445</id>
    </interactant>
    <interactant intactId="EBI-537572">
        <id>Q9C562</id>
        <label>CIPK10</label>
    </interactant>
    <organismsDiffer>false</organismsDiffer>
    <experiments>3</experiments>
</comment>
<comment type="interaction">
    <interactant intactId="EBI-974530">
        <id>O81445</id>
    </interactant>
    <interactant intactId="EBI-1748707">
        <id>Q9LYQ8</id>
        <label>CIPK2</label>
    </interactant>
    <organismsDiffer>false</organismsDiffer>
    <experiments>3</experiments>
</comment>
<comment type="interaction">
    <interactant intactId="EBI-974530">
        <id>O81445</id>
    </interactant>
    <interactant intactId="EBI-974277">
        <id>Q93VD3</id>
        <label>CIPK23</label>
    </interactant>
    <organismsDiffer>false</organismsDiffer>
    <experiments>6</experiments>
</comment>
<comment type="interaction">
    <interactant intactId="EBI-974530">
        <id>O81445</id>
    </interactant>
    <interactant intactId="EBI-537551">
        <id>Q9LDI3</id>
        <label>CIPK24</label>
    </interactant>
    <organismsDiffer>false</organismsDiffer>
    <experiments>6</experiments>
</comment>
<comment type="interaction">
    <interactant intactId="EBI-974530">
        <id>O81445</id>
    </interactant>
    <interactant intactId="EBI-2026322">
        <id>Q9LEU7</id>
        <label>CIPK5</label>
    </interactant>
    <organismsDiffer>false</organismsDiffer>
    <experiments>5</experiments>
</comment>
<comment type="interaction">
    <interactant intactId="EBI-974530">
        <id>O81445</id>
    </interactant>
    <interactant intactId="EBI-537615">
        <id>O65554</id>
        <label>CIPK6</label>
    </interactant>
    <organismsDiffer>false</organismsDiffer>
    <experiments>3</experiments>
</comment>
<comment type="interaction">
    <interactant intactId="EBI-974530">
        <id>O81445</id>
    </interactant>
    <interactant intactId="EBI-1765255">
        <id>Q9XIW0</id>
        <label>CIPK7</label>
    </interactant>
    <organismsDiffer>false</organismsDiffer>
    <experiments>3</experiments>
</comment>
<comment type="interaction">
    <interactant intactId="EBI-974530">
        <id>O81445</id>
    </interactant>
    <interactant intactId="EBI-2026454">
        <id>Q9STV4</id>
        <label>CIPK8</label>
    </interactant>
    <organismsDiffer>false</organismsDiffer>
    <experiments>4</experiments>
</comment>
<comment type="subcellular location">
    <subcellularLocation>
        <location evidence="14 15 17 18 19 24">Cell membrane</location>
        <topology evidence="14 15 17 18 19 24">Lipid-anchor</topology>
    </subcellularLocation>
    <text>The cell membrane localization is S-acylation dependent and is abolished by 2-bromopalmitate (2-BP) treatment.</text>
</comment>
<comment type="alternative products">
    <event type="alternative splicing"/>
    <isoform>
        <id>O81445-1</id>
        <name>1</name>
        <sequence type="displayed"/>
    </isoform>
    <text>A number of isoforms are produced. According to EST sequences.</text>
</comment>
<comment type="tissue specificity">
    <text evidence="4 9 14 17">Preferentially expressed in stems, roots and siliques. Coexpressed with CIPK15/PKS3 in guard cells. Co-localized with CIPK23 in root tips and vascular bundles in the stem and the leaf, as well as in guard cells.</text>
</comment>
<comment type="induction">
    <text evidence="4 8 12 21 25">By light, drought, salt, cold and wounding. Up-regulated by glucose, but not by sucrose or fructose.</text>
</comment>
<comment type="domain">
    <text evidence="19">The N-terminal 12 amino acids are sufficient for cell membrane targeting.</text>
</comment>
<comment type="PTM">
    <text evidence="18 22 23">S-acylated at Cys-3 by either palmitate or stearate. Myristoylation is a prerequisite for the subsequent acylation. Myristoylation is important for endoplasmic reticulum targeting and subsequent acylation at the endoplasmic reticulum enables further trafficking to the plasma membrane. Phosphorylated by CIPK23 and CIPK24.</text>
</comment>
<comment type="disruption phenotype">
    <text evidence="11 21 25">No visible phenotypes when grown under normal conditions, but increased sensitivity to low temperature. Hypersensitivity to paclobutrazol and to drought, glucose and salt stresses.</text>
</comment>
<comment type="miscellaneous">
    <text evidence="27">Calcium binding of CBL1 is not required for membrane association and the endoplasmic reticulum-to-plasma membrane trafficking relies on a brefeldin A-insensitive pathway. Lipid modification is not required for interaction between CBL1 and CIPK1 (PubMed:18502848).</text>
</comment>
<comment type="similarity">
    <text evidence="26">Belongs to the calcineurin regulatory subunit family.</text>
</comment>
<comment type="sequence caution" evidence="26">
    <conflict type="erroneous gene model prediction">
        <sequence resource="EMBL-CDS" id="CAB10542"/>
    </conflict>
    <text>The predicted gene At4g17620 has been split into 3 genes: At4g17615, At4g17616 and At4g17620.</text>
</comment>
<comment type="sequence caution" evidence="26">
    <conflict type="erroneous gene model prediction">
        <sequence resource="EMBL-CDS" id="CAB78765"/>
    </conflict>
    <text>The predicted gene At4g17620 has been split into 3 genes: At4g17615, At4g17616 and At4g17620.</text>
</comment>
<reference key="1">
    <citation type="journal article" date="1999" name="Proc. Natl. Acad. Sci. U.S.A.">
        <title>Genes for calcineurin B-like proteins in Arabidopsis are differentially regulated by stress signals.</title>
        <authorList>
            <person name="Kudla J."/>
            <person name="Xu Q."/>
            <person name="Harter K."/>
            <person name="Gruissem W."/>
            <person name="Luan S."/>
        </authorList>
    </citation>
    <scope>NUCLEOTIDE SEQUENCE [MRNA]</scope>
    <scope>TISSUE SPECIFICITY</scope>
    <scope>INDUCTION</scope>
    <source>
        <strain>cv. Columbia</strain>
    </source>
</reference>
<reference key="2">
    <citation type="journal article" date="1998" name="Nature">
        <title>Analysis of 1.9 Mb of contiguous sequence from chromosome 4 of Arabidopsis thaliana.</title>
        <authorList>
            <person name="Bevan M."/>
            <person name="Bancroft I."/>
            <person name="Bent E."/>
            <person name="Love K."/>
            <person name="Goodman H.M."/>
            <person name="Dean C."/>
            <person name="Bergkamp R."/>
            <person name="Dirkse W."/>
            <person name="van Staveren M."/>
            <person name="Stiekema W."/>
            <person name="Drost L."/>
            <person name="Ridley P."/>
            <person name="Hudson S.-A."/>
            <person name="Patel K."/>
            <person name="Murphy G."/>
            <person name="Piffanelli P."/>
            <person name="Wedler H."/>
            <person name="Wedler E."/>
            <person name="Wambutt R."/>
            <person name="Weitzenegger T."/>
            <person name="Pohl T."/>
            <person name="Terryn N."/>
            <person name="Gielen J."/>
            <person name="Villarroel R."/>
            <person name="De Clercq R."/>
            <person name="van Montagu M."/>
            <person name="Lecharny A."/>
            <person name="Aubourg S."/>
            <person name="Gy I."/>
            <person name="Kreis M."/>
            <person name="Lao N."/>
            <person name="Kavanagh T."/>
            <person name="Hempel S."/>
            <person name="Kotter P."/>
            <person name="Entian K.-D."/>
            <person name="Rieger M."/>
            <person name="Schaefer M."/>
            <person name="Funk B."/>
            <person name="Mueller-Auer S."/>
            <person name="Silvey M."/>
            <person name="James R."/>
            <person name="Monfort A."/>
            <person name="Pons A."/>
            <person name="Puigdomenech P."/>
            <person name="Douka A."/>
            <person name="Voukelatou E."/>
            <person name="Milioni D."/>
            <person name="Hatzopoulos P."/>
            <person name="Piravandi E."/>
            <person name="Obermaier B."/>
            <person name="Hilbert H."/>
            <person name="Duesterhoeft A."/>
            <person name="Moores T."/>
            <person name="Jones J.D.G."/>
            <person name="Eneva T."/>
            <person name="Palme K."/>
            <person name="Benes V."/>
            <person name="Rechmann S."/>
            <person name="Ansorge W."/>
            <person name="Cooke R."/>
            <person name="Berger C."/>
            <person name="Delseny M."/>
            <person name="Voet M."/>
            <person name="Volckaert G."/>
            <person name="Mewes H.-W."/>
            <person name="Klosterman S."/>
            <person name="Schueller C."/>
            <person name="Chalwatzis N."/>
        </authorList>
    </citation>
    <scope>NUCLEOTIDE SEQUENCE [LARGE SCALE GENOMIC DNA]</scope>
    <source>
        <strain>cv. Columbia</strain>
    </source>
</reference>
<reference key="3">
    <citation type="journal article" date="1999" name="Nature">
        <title>Sequence and analysis of chromosome 4 of the plant Arabidopsis thaliana.</title>
        <authorList>
            <person name="Mayer K.F.X."/>
            <person name="Schueller C."/>
            <person name="Wambutt R."/>
            <person name="Murphy G."/>
            <person name="Volckaert G."/>
            <person name="Pohl T."/>
            <person name="Duesterhoeft A."/>
            <person name="Stiekema W."/>
            <person name="Entian K.-D."/>
            <person name="Terryn N."/>
            <person name="Harris B."/>
            <person name="Ansorge W."/>
            <person name="Brandt P."/>
            <person name="Grivell L.A."/>
            <person name="Rieger M."/>
            <person name="Weichselgartner M."/>
            <person name="de Simone V."/>
            <person name="Obermaier B."/>
            <person name="Mache R."/>
            <person name="Mueller M."/>
            <person name="Kreis M."/>
            <person name="Delseny M."/>
            <person name="Puigdomenech P."/>
            <person name="Watson M."/>
            <person name="Schmidtheini T."/>
            <person name="Reichert B."/>
            <person name="Portetelle D."/>
            <person name="Perez-Alonso M."/>
            <person name="Boutry M."/>
            <person name="Bancroft I."/>
            <person name="Vos P."/>
            <person name="Hoheisel J."/>
            <person name="Zimmermann W."/>
            <person name="Wedler H."/>
            <person name="Ridley P."/>
            <person name="Langham S.-A."/>
            <person name="McCullagh B."/>
            <person name="Bilham L."/>
            <person name="Robben J."/>
            <person name="van der Schueren J."/>
            <person name="Grymonprez B."/>
            <person name="Chuang Y.-J."/>
            <person name="Vandenbussche F."/>
            <person name="Braeken M."/>
            <person name="Weltjens I."/>
            <person name="Voet M."/>
            <person name="Bastiaens I."/>
            <person name="Aert R."/>
            <person name="Defoor E."/>
            <person name="Weitzenegger T."/>
            <person name="Bothe G."/>
            <person name="Ramsperger U."/>
            <person name="Hilbert H."/>
            <person name="Braun M."/>
            <person name="Holzer E."/>
            <person name="Brandt A."/>
            <person name="Peters S."/>
            <person name="van Staveren M."/>
            <person name="Dirkse W."/>
            <person name="Mooijman P."/>
            <person name="Klein Lankhorst R."/>
            <person name="Rose M."/>
            <person name="Hauf J."/>
            <person name="Koetter P."/>
            <person name="Berneiser S."/>
            <person name="Hempel S."/>
            <person name="Feldpausch M."/>
            <person name="Lamberth S."/>
            <person name="Van den Daele H."/>
            <person name="De Keyser A."/>
            <person name="Buysshaert C."/>
            <person name="Gielen J."/>
            <person name="Villarroel R."/>
            <person name="De Clercq R."/>
            <person name="van Montagu M."/>
            <person name="Rogers J."/>
            <person name="Cronin A."/>
            <person name="Quail M.A."/>
            <person name="Bray-Allen S."/>
            <person name="Clark L."/>
            <person name="Doggett J."/>
            <person name="Hall S."/>
            <person name="Kay M."/>
            <person name="Lennard N."/>
            <person name="McLay K."/>
            <person name="Mayes R."/>
            <person name="Pettett A."/>
            <person name="Rajandream M.A."/>
            <person name="Lyne M."/>
            <person name="Benes V."/>
            <person name="Rechmann S."/>
            <person name="Borkova D."/>
            <person name="Bloecker H."/>
            <person name="Scharfe M."/>
            <person name="Grimm M."/>
            <person name="Loehnert T.-H."/>
            <person name="Dose S."/>
            <person name="de Haan M."/>
            <person name="Maarse A.C."/>
            <person name="Schaefer M."/>
            <person name="Mueller-Auer S."/>
            <person name="Gabel C."/>
            <person name="Fuchs M."/>
            <person name="Fartmann B."/>
            <person name="Granderath K."/>
            <person name="Dauner D."/>
            <person name="Herzl A."/>
            <person name="Neumann S."/>
            <person name="Argiriou A."/>
            <person name="Vitale D."/>
            <person name="Liguori R."/>
            <person name="Piravandi E."/>
            <person name="Massenet O."/>
            <person name="Quigley F."/>
            <person name="Clabauld G."/>
            <person name="Muendlein A."/>
            <person name="Felber R."/>
            <person name="Schnabl S."/>
            <person name="Hiller R."/>
            <person name="Schmidt W."/>
            <person name="Lecharny A."/>
            <person name="Aubourg S."/>
            <person name="Chefdor F."/>
            <person name="Cooke R."/>
            <person name="Berger C."/>
            <person name="Monfort A."/>
            <person name="Casacuberta E."/>
            <person name="Gibbons T."/>
            <person name="Weber N."/>
            <person name="Vandenbol M."/>
            <person name="Bargues M."/>
            <person name="Terol J."/>
            <person name="Torres A."/>
            <person name="Perez-Perez A."/>
            <person name="Purnelle B."/>
            <person name="Bent E."/>
            <person name="Johnson S."/>
            <person name="Tacon D."/>
            <person name="Jesse T."/>
            <person name="Heijnen L."/>
            <person name="Schwarz S."/>
            <person name="Scholler P."/>
            <person name="Heber S."/>
            <person name="Francs P."/>
            <person name="Bielke C."/>
            <person name="Frishman D."/>
            <person name="Haase D."/>
            <person name="Lemcke K."/>
            <person name="Mewes H.-W."/>
            <person name="Stocker S."/>
            <person name="Zaccaria P."/>
            <person name="Bevan M."/>
            <person name="Wilson R.K."/>
            <person name="de la Bastide M."/>
            <person name="Habermann K."/>
            <person name="Parnell L."/>
            <person name="Dedhia N."/>
            <person name="Gnoj L."/>
            <person name="Schutz K."/>
            <person name="Huang E."/>
            <person name="Spiegel L."/>
            <person name="Sekhon M."/>
            <person name="Murray J."/>
            <person name="Sheet P."/>
            <person name="Cordes M."/>
            <person name="Abu-Threideh J."/>
            <person name="Stoneking T."/>
            <person name="Kalicki J."/>
            <person name="Graves T."/>
            <person name="Harmon G."/>
            <person name="Edwards J."/>
            <person name="Latreille P."/>
            <person name="Courtney L."/>
            <person name="Cloud J."/>
            <person name="Abbott A."/>
            <person name="Scott K."/>
            <person name="Johnson D."/>
            <person name="Minx P."/>
            <person name="Bentley D."/>
            <person name="Fulton B."/>
            <person name="Miller N."/>
            <person name="Greco T."/>
            <person name="Kemp K."/>
            <person name="Kramer J."/>
            <person name="Fulton L."/>
            <person name="Mardis E."/>
            <person name="Dante M."/>
            <person name="Pepin K."/>
            <person name="Hillier L.W."/>
            <person name="Nelson J."/>
            <person name="Spieth J."/>
            <person name="Ryan E."/>
            <person name="Andrews S."/>
            <person name="Geisel C."/>
            <person name="Layman D."/>
            <person name="Du H."/>
            <person name="Ali J."/>
            <person name="Berghoff A."/>
            <person name="Jones K."/>
            <person name="Drone K."/>
            <person name="Cotton M."/>
            <person name="Joshu C."/>
            <person name="Antonoiu B."/>
            <person name="Zidanic M."/>
            <person name="Strong C."/>
            <person name="Sun H."/>
            <person name="Lamar B."/>
            <person name="Yordan C."/>
            <person name="Ma P."/>
            <person name="Zhong J."/>
            <person name="Preston R."/>
            <person name="Vil D."/>
            <person name="Shekher M."/>
            <person name="Matero A."/>
            <person name="Shah R."/>
            <person name="Swaby I.K."/>
            <person name="O'Shaughnessy A."/>
            <person name="Rodriguez M."/>
            <person name="Hoffman J."/>
            <person name="Till S."/>
            <person name="Granat S."/>
            <person name="Shohdy N."/>
            <person name="Hasegawa A."/>
            <person name="Hameed A."/>
            <person name="Lodhi M."/>
            <person name="Johnson A."/>
            <person name="Chen E."/>
            <person name="Marra M.A."/>
            <person name="Martienssen R."/>
            <person name="McCombie W.R."/>
        </authorList>
    </citation>
    <scope>NUCLEOTIDE SEQUENCE [LARGE SCALE GENOMIC DNA]</scope>
    <source>
        <strain>cv. Columbia</strain>
    </source>
</reference>
<reference key="4">
    <citation type="journal article" date="2017" name="Plant J.">
        <title>Araport11: a complete reannotation of the Arabidopsis thaliana reference genome.</title>
        <authorList>
            <person name="Cheng C.Y."/>
            <person name="Krishnakumar V."/>
            <person name="Chan A.P."/>
            <person name="Thibaud-Nissen F."/>
            <person name="Schobel S."/>
            <person name="Town C.D."/>
        </authorList>
    </citation>
    <scope>GENOME REANNOTATION</scope>
    <source>
        <strain>cv. Columbia</strain>
    </source>
</reference>
<reference key="5">
    <citation type="journal article" date="2002" name="Science">
        <title>Functional annotation of a full-length Arabidopsis cDNA collection.</title>
        <authorList>
            <person name="Seki M."/>
            <person name="Narusaka M."/>
            <person name="Kamiya A."/>
            <person name="Ishida J."/>
            <person name="Satou M."/>
            <person name="Sakurai T."/>
            <person name="Nakajima M."/>
            <person name="Enju A."/>
            <person name="Akiyama K."/>
            <person name="Oono Y."/>
            <person name="Muramatsu M."/>
            <person name="Hayashizaki Y."/>
            <person name="Kawai J."/>
            <person name="Carninci P."/>
            <person name="Itoh M."/>
            <person name="Ishii Y."/>
            <person name="Arakawa T."/>
            <person name="Shibata K."/>
            <person name="Shinagawa A."/>
            <person name="Shinozaki K."/>
        </authorList>
    </citation>
    <scope>NUCLEOTIDE SEQUENCE [LARGE SCALE MRNA]</scope>
    <source>
        <strain>cv. Columbia</strain>
    </source>
</reference>
<reference key="6">
    <citation type="journal article" date="2003" name="Science">
        <title>Empirical analysis of transcriptional activity in the Arabidopsis genome.</title>
        <authorList>
            <person name="Yamada K."/>
            <person name="Lim J."/>
            <person name="Dale J.M."/>
            <person name="Chen H."/>
            <person name="Shinn P."/>
            <person name="Palm C.J."/>
            <person name="Southwick A.M."/>
            <person name="Wu H.C."/>
            <person name="Kim C.J."/>
            <person name="Nguyen M."/>
            <person name="Pham P.K."/>
            <person name="Cheuk R.F."/>
            <person name="Karlin-Newmann G."/>
            <person name="Liu S.X."/>
            <person name="Lam B."/>
            <person name="Sakano H."/>
            <person name="Wu T."/>
            <person name="Yu G."/>
            <person name="Miranda M."/>
            <person name="Quach H.L."/>
            <person name="Tripp M."/>
            <person name="Chang C.H."/>
            <person name="Lee J.M."/>
            <person name="Toriumi M.J."/>
            <person name="Chan M.M."/>
            <person name="Tang C.C."/>
            <person name="Onodera C.S."/>
            <person name="Deng J.M."/>
            <person name="Akiyama K."/>
            <person name="Ansari Y."/>
            <person name="Arakawa T."/>
            <person name="Banh J."/>
            <person name="Banno F."/>
            <person name="Bowser L."/>
            <person name="Brooks S.Y."/>
            <person name="Carninci P."/>
            <person name="Chao Q."/>
            <person name="Choy N."/>
            <person name="Enju A."/>
            <person name="Goldsmith A.D."/>
            <person name="Gurjal M."/>
            <person name="Hansen N.F."/>
            <person name="Hayashizaki Y."/>
            <person name="Johnson-Hopson C."/>
            <person name="Hsuan V.W."/>
            <person name="Iida K."/>
            <person name="Karnes M."/>
            <person name="Khan S."/>
            <person name="Koesema E."/>
            <person name="Ishida J."/>
            <person name="Jiang P.X."/>
            <person name="Jones T."/>
            <person name="Kawai J."/>
            <person name="Kamiya A."/>
            <person name="Meyers C."/>
            <person name="Nakajima M."/>
            <person name="Narusaka M."/>
            <person name="Seki M."/>
            <person name="Sakurai T."/>
            <person name="Satou M."/>
            <person name="Tamse R."/>
            <person name="Vaysberg M."/>
            <person name="Wallender E.K."/>
            <person name="Wong C."/>
            <person name="Yamamura Y."/>
            <person name="Yuan S."/>
            <person name="Shinozaki K."/>
            <person name="Davis R.W."/>
            <person name="Theologis A."/>
            <person name="Ecker J.R."/>
        </authorList>
    </citation>
    <scope>NUCLEOTIDE SEQUENCE [LARGE SCALE MRNA]</scope>
    <source>
        <strain>cv. Columbia</strain>
    </source>
</reference>
<reference key="7">
    <citation type="journal article" date="1999" name="Plant Cell">
        <title>Novel protein kinases associated with calcineurin B-like calcium sensors in Arabidopsis.</title>
        <authorList>
            <person name="Shi J."/>
            <person name="Kim K.-N."/>
            <person name="Ritz O."/>
            <person name="Albrecht V."/>
            <person name="Gupta R."/>
            <person name="Harter K."/>
            <person name="Luan S."/>
            <person name="Kudla J."/>
        </authorList>
    </citation>
    <scope>INTERACTION WITH CIPK1</scope>
</reference>
<reference key="8">
    <citation type="journal article" date="2000" name="Plant Physiol.">
        <title>Interaction specificity of Arabidopsis calcineurin B-like calcium sensors and their target kinases.</title>
        <authorList>
            <person name="Kim K.-N."/>
            <person name="Cheong Y.H."/>
            <person name="Gupta R."/>
            <person name="Luan S."/>
        </authorList>
    </citation>
    <scope>NUCLEOTIDE SEQUENCE [MRNA]</scope>
    <scope>INTERACTION WITH CIPK1</scope>
    <source>
        <strain>cv. Columbia</strain>
    </source>
</reference>
<reference key="9">
    <citation type="journal article" date="2001" name="EMBO J.">
        <title>The NAF domain defines a novel protein-protein interaction module conserved in Ca(2+)-regulated kinases.</title>
        <authorList>
            <person name="Albrecht V."/>
            <person name="Ritz O."/>
            <person name="Linder S."/>
            <person name="Harter K."/>
            <person name="Kudla J."/>
        </authorList>
    </citation>
    <scope>INTERACTION WITH CIPK11</scope>
</reference>
<reference key="10">
    <citation type="journal article" date="2001" name="Plant Cell Physiol.">
        <title>An Arabidopsis SNF1-related protein kinase, AtSR1, interacts with a calcium-binding protein, AtCBL2, of which transcripts respond to light.</title>
        <authorList>
            <person name="Nozawa A."/>
            <person name="Koizumi N."/>
            <person name="Sano H."/>
        </authorList>
    </citation>
    <scope>INDUCTION</scope>
</reference>
<reference key="11">
    <citation type="journal article" date="2002" name="Dev. Cell">
        <title>A calcium sensor and its interacting protein kinase are global regulators of abscisic acid signaling in Arabidopsis.</title>
        <authorList>
            <person name="Guo Y."/>
            <person name="Xiong L."/>
            <person name="Song C.-P."/>
            <person name="Gong D."/>
            <person name="Halfter U."/>
            <person name="Zhu J.-K."/>
        </authorList>
    </citation>
    <scope>FUNCTION</scope>
    <scope>TISSUE SPECIFICITY</scope>
    <scope>INTERACTION WITH CIPK15/PKS3</scope>
</reference>
<reference key="12">
    <citation type="journal article" date="2003" name="Plant Cell">
        <title>CBL1, a calcium sensor that differentially regulates salt, drought, and cold responses in Arabidopsis.</title>
        <authorList>
            <person name="Cheong Y.H."/>
            <person name="Kim K.-N."/>
            <person name="Pandey G.K."/>
            <person name="Gupta R."/>
            <person name="Grant J.J."/>
            <person name="Luan S."/>
        </authorList>
    </citation>
    <scope>FUNCTION</scope>
</reference>
<reference key="13">
    <citation type="journal article" date="2003" name="Plant J.">
        <title>The calcium sensor CBL1 integrates plant responses to abiotic stresses.</title>
        <authorList>
            <person name="Albrecht V."/>
            <person name="Weinl S."/>
            <person name="Blazevic D."/>
            <person name="D'Angelo C."/>
            <person name="Batistic O."/>
            <person name="Kolukisaoglu U."/>
            <person name="Bock R."/>
            <person name="Schulz B."/>
            <person name="Harter K."/>
            <person name="Kudla J."/>
        </authorList>
    </citation>
    <scope>FUNCTION</scope>
    <scope>DISRUPTION PHENOTYPE</scope>
</reference>
<reference key="14">
    <citation type="journal article" date="2004" name="Plant Physiol.">
        <title>Calcium sensors and their interacting protein kinases: genomics of the Arabidopsis and rice CBL-CIPK signaling networks.</title>
        <authorList>
            <person name="Kolukisaoglu U."/>
            <person name="Weinl S."/>
            <person name="Blazevic D."/>
            <person name="Batistic O."/>
            <person name="Kudla J."/>
        </authorList>
    </citation>
    <scope>GENE FAMILY</scope>
    <scope>INDUCTION</scope>
    <scope>INTERACTION WITH CIPK1; CIPK7; CIPK8; CIPK17; CIPK18 AND CIPK24</scope>
</reference>
<reference key="15">
    <citation type="journal article" date="2006" name="Cell">
        <title>A protein kinase, interacting with two calcineurin B-like proteins, regulates K+ transporter AKT1 in Arabidopsis.</title>
        <authorList>
            <person name="Xu J."/>
            <person name="Li H.-D."/>
            <person name="Chen L.-Q."/>
            <person name="Wang Y."/>
            <person name="Liu L.-L."/>
            <person name="He L."/>
            <person name="Wu W.-H."/>
        </authorList>
    </citation>
    <scope>FUNCTION</scope>
    <scope>INTERACTION WITH CIPK23</scope>
    <scope>TISSUE SPECIFICITY</scope>
    <scope>SUBCELLULAR LOCATION</scope>
</reference>
<reference key="16">
    <citation type="journal article" date="2006" name="J. Cell Biol.">
        <title>A role for the RabA4b effector protein PI-4Kbeta1 in polarized expansion of root hair cells in Arabidopsis thaliana.</title>
        <authorList>
            <person name="Preuss M.L."/>
            <person name="Schmitz A.J."/>
            <person name="Thole J.M."/>
            <person name="Bonner H.K.S."/>
            <person name="Otegui M.S."/>
            <person name="Nielsen E."/>
        </authorList>
    </citation>
    <scope>INTERACTION WITH PI4KB1</scope>
</reference>
<reference key="17">
    <citation type="journal article" date="2007" name="Plant J.">
        <title>Two calcineurin B-like calcium sensors, interacting with protein kinase CIPK23, regulate leaf transpiration and root potassium uptake in Arabidopsis.</title>
        <authorList>
            <person name="Cheong Y.H."/>
            <person name="Pandey G.K."/>
            <person name="Grant J.J."/>
            <person name="Batistic O."/>
            <person name="Li L."/>
            <person name="Kim B.-G."/>
            <person name="Lee S.-C."/>
            <person name="Kudla J."/>
            <person name="Luan S."/>
        </authorList>
    </citation>
    <scope>FUNCTION</scope>
    <scope>INTERACTION WITH CIPK23</scope>
    <scope>TISSUE SPECIFICITY</scope>
    <scope>SUBCELLULAR LOCATION</scope>
</reference>
<reference key="18">
    <citation type="journal article" date="2007" name="Plant J.">
        <title>The calcium sensor CBL10 mediates salt tolerance by regulating ion homeostasis in Arabidopsis.</title>
        <authorList>
            <person name="Kim B.G."/>
            <person name="Waadt R."/>
            <person name="Cheong Y.H."/>
            <person name="Pandey G.K."/>
            <person name="Dominguez-Solis J.R."/>
            <person name="Schueltke S."/>
            <person name="Lee S.C."/>
            <person name="Kudla J."/>
            <person name="Luan S."/>
        </authorList>
    </citation>
    <scope>SUBCELLULAR LOCATION</scope>
    <scope>INTERACTION WITH CIPK24</scope>
</reference>
<reference key="19">
    <citation type="journal article" date="2007" name="Proc. Natl. Acad. Sci. U.S.A.">
        <title>A protein phosphorylation/dephosphorylation network regulates a plant potassium channel.</title>
        <authorList>
            <person name="Lee S.-C."/>
            <person name="Lan W.-Z."/>
            <person name="Kim B.-G."/>
            <person name="Li L."/>
            <person name="Cheong Y.H."/>
            <person name="Pandey G.K."/>
            <person name="Lu G."/>
            <person name="Buchanan B.B."/>
            <person name="Luan S."/>
        </authorList>
    </citation>
    <scope>FUNCTION</scope>
    <scope>INTERACTION WITH CIPK6; CIPK16 AND CIPK23</scope>
</reference>
<reference key="20">
    <citation type="journal article" date="2008" name="Plant Cell">
        <title>Dual fatty acyl modification determines the localization and plasma membrane targeting of CBL/CIPK Ca2+ signaling complexes in Arabidopsis.</title>
        <authorList>
            <person name="Batistic O."/>
            <person name="Sorek N."/>
            <person name="Schueltke S."/>
            <person name="Yalovsky S."/>
            <person name="Kudla J."/>
        </authorList>
    </citation>
    <scope>SUBCELLULAR LOCATION</scope>
    <scope>MUTAGENESIS OF GLY-2 AND CYS-3</scope>
    <scope>MYRISTOYLATION AT GLY-2</scope>
    <scope>STEAROYLATION AT CYS-3</scope>
    <scope>PALMITOYLATION AT CYS-3</scope>
    <scope>INTERACTION WITH CIPK1</scope>
</reference>
<reference key="21">
    <citation type="journal article" date="2010" name="Plant J.">
        <title>CBL-mediated targeting of CIPKs facilitates the decoding of calcium signals emanating from distinct cellular stores.</title>
        <authorList>
            <person name="Batistic O."/>
            <person name="Waadt R."/>
            <person name="Steinhorst L."/>
            <person name="Held K."/>
            <person name="Kudla J."/>
        </authorList>
    </citation>
    <scope>SUBCELLULAR LOCATION</scope>
    <scope>DOMAIN</scope>
    <scope>INTERACTION WITH CIPK24</scope>
</reference>
<reference key="22">
    <citation type="journal article" date="2011" name="Mol. Plant">
        <title>Mechanistic analysis of AKT1 regulation by the CBL-CIPK-PP2CA interactions.</title>
        <authorList>
            <person name="Lan W.Z."/>
            <person name="Lee S.C."/>
            <person name="Che Y.F."/>
            <person name="Jiang Y.Q."/>
            <person name="Luan S."/>
        </authorList>
    </citation>
    <scope>INTERACTION WITH PP2CA</scope>
</reference>
<reference key="23">
    <citation type="journal article" date="2011" name="Plant Physiol.">
        <title>Phosphorylation of SOS3-like calcium-binding proteins by their interacting SOS2-like protein kinases is a common regulatory mechanism in Arabidopsis.</title>
        <authorList>
            <person name="Du W."/>
            <person name="Lin H."/>
            <person name="Chen S."/>
            <person name="Wu Y."/>
            <person name="Zhang J."/>
            <person name="Fuglsang A.T."/>
            <person name="Palmgren M.G."/>
            <person name="Wu W."/>
            <person name="Guo Y."/>
        </authorList>
    </citation>
    <scope>PHOSPHORYLATION AT SER-201</scope>
    <scope>MUTAGENESIS OF SER-201</scope>
    <scope>INTERACTION WITH CIPK23</scope>
</reference>
<reference key="24">
    <citation type="journal article" date="2011" name="Plant Sci.">
        <title>CIPK7 is involved in cold response by interacting with CBL1 in Arabidopsis thaliana.</title>
        <authorList>
            <person name="Huang C."/>
            <person name="Ding S."/>
            <person name="Zhang H."/>
            <person name="Du H."/>
            <person name="An L."/>
        </authorList>
    </citation>
    <scope>INTERACTION WITH CIPK7</scope>
    <scope>INDUCTION BY COLD</scope>
    <scope>DISRUPTION PHENOTYPE</scope>
</reference>
<reference key="25">
    <citation type="journal article" date="2012" name="J. Biol. Chem.">
        <title>Phosphorylation of calcineurin B-like (CBL) calcium sensor proteins by their CBL-interacting protein kinases (CIPKs) is required for full activity of CBL-CIPK complexes toward their target proteins.</title>
        <authorList>
            <person name="Hashimoto K."/>
            <person name="Eckert C."/>
            <person name="Anschuetz U."/>
            <person name="Scholz M."/>
            <person name="Held K."/>
            <person name="Waadt R."/>
            <person name="Reyer A."/>
            <person name="Hippler M."/>
            <person name="Becker D."/>
            <person name="Kudla J."/>
        </authorList>
    </citation>
    <scope>PHOSPHORYLATION</scope>
    <scope>INTERACTION WITH CIPK24</scope>
    <scope>MUTAGENESIS OF SER-201</scope>
</reference>
<reference key="26">
    <citation type="journal article" date="2013" name="Mol. Plant">
        <title>The Calcineurin B-like calcium sensors CBL1 and CBL9 together with their interacting protein kinase CIPK26 regulate the Arabidopsis NADPH oxidase RBOHF.</title>
        <authorList>
            <person name="Drerup M.M."/>
            <person name="Schluecking K."/>
            <person name="Hashimoto K."/>
            <person name="Manishankar P."/>
            <person name="Steinhorst L."/>
            <person name="Kuchitsu K."/>
            <person name="Kudla J."/>
        </authorList>
    </citation>
    <scope>FUNCTION</scope>
    <scope>INTERACTION WITH CIPK26</scope>
    <scope>SUBCELLULAR LOCATION</scope>
</reference>
<reference key="27">
    <citation type="journal article" date="2013" name="PLoS ONE">
        <title>A novel role for Arabidopsis CBL1 in affecting plant responses to glucose and gibberellin during germination and seedling development.</title>
        <authorList>
            <person name="Li Z.Y."/>
            <person name="Xu Z.S."/>
            <person name="Chen Y."/>
            <person name="He G.Y."/>
            <person name="Yang G.X."/>
            <person name="Chen M."/>
            <person name="Li L.C."/>
            <person name="Ma Y.Z."/>
        </authorList>
    </citation>
    <scope>FUNCTION</scope>
    <scope>INDUCTION BY GLUCOSE</scope>
    <scope>DISRUPTION PHENOTYPE</scope>
    <scope>INTERACTION WITH KINB1</scope>
    <source>
        <strain>cv. Columbia</strain>
    </source>
</reference>
<feature type="initiator methionine" description="Removed" evidence="2">
    <location>
        <position position="1"/>
    </location>
</feature>
<feature type="chain" id="PRO_0000073502" description="Calcineurin B-like protein 1">
    <location>
        <begin position="2"/>
        <end position="213"/>
    </location>
</feature>
<feature type="domain" description="EF-hand 1" evidence="26">
    <location>
        <begin position="31"/>
        <end position="66"/>
    </location>
</feature>
<feature type="domain" description="EF-hand 2" evidence="3">
    <location>
        <begin position="67"/>
        <end position="102"/>
    </location>
</feature>
<feature type="domain" description="EF-hand 3" evidence="3">
    <location>
        <begin position="104"/>
        <end position="139"/>
    </location>
</feature>
<feature type="domain" description="EF-hand 4" evidence="3">
    <location>
        <begin position="148"/>
        <end position="183"/>
    </location>
</feature>
<feature type="binding site" evidence="3">
    <location>
        <position position="117"/>
    </location>
    <ligand>
        <name>Ca(2+)</name>
        <dbReference type="ChEBI" id="CHEBI:29108"/>
        <label>1</label>
    </ligand>
</feature>
<feature type="binding site" evidence="3">
    <location>
        <position position="119"/>
    </location>
    <ligand>
        <name>Ca(2+)</name>
        <dbReference type="ChEBI" id="CHEBI:29108"/>
        <label>1</label>
    </ligand>
</feature>
<feature type="binding site" evidence="3">
    <location>
        <position position="121"/>
    </location>
    <ligand>
        <name>Ca(2+)</name>
        <dbReference type="ChEBI" id="CHEBI:29108"/>
        <label>1</label>
    </ligand>
</feature>
<feature type="binding site" evidence="3">
    <location>
        <position position="123"/>
    </location>
    <ligand>
        <name>Ca(2+)</name>
        <dbReference type="ChEBI" id="CHEBI:29108"/>
        <label>1</label>
    </ligand>
</feature>
<feature type="binding site" evidence="3">
    <location>
        <position position="128"/>
    </location>
    <ligand>
        <name>Ca(2+)</name>
        <dbReference type="ChEBI" id="CHEBI:29108"/>
        <label>1</label>
    </ligand>
</feature>
<feature type="binding site" evidence="3">
    <location>
        <position position="161"/>
    </location>
    <ligand>
        <name>Ca(2+)</name>
        <dbReference type="ChEBI" id="CHEBI:29108"/>
        <label>2</label>
    </ligand>
</feature>
<feature type="binding site" evidence="3">
    <location>
        <position position="163"/>
    </location>
    <ligand>
        <name>Ca(2+)</name>
        <dbReference type="ChEBI" id="CHEBI:29108"/>
        <label>2</label>
    </ligand>
</feature>
<feature type="binding site" evidence="3">
    <location>
        <position position="165"/>
    </location>
    <ligand>
        <name>Ca(2+)</name>
        <dbReference type="ChEBI" id="CHEBI:29108"/>
        <label>2</label>
    </ligand>
</feature>
<feature type="binding site" evidence="3">
    <location>
        <position position="167"/>
    </location>
    <ligand>
        <name>Ca(2+)</name>
        <dbReference type="ChEBI" id="CHEBI:29108"/>
        <label>2</label>
    </ligand>
</feature>
<feature type="binding site" evidence="3">
    <location>
        <position position="172"/>
    </location>
    <ligand>
        <name>Ca(2+)</name>
        <dbReference type="ChEBI" id="CHEBI:29108"/>
        <label>2</label>
    </ligand>
</feature>
<feature type="site" description="Involved in dimerization" evidence="1">
    <location>
        <position position="140"/>
    </location>
</feature>
<feature type="modified residue" description="Phosphoserine; by CIPK23" evidence="22">
    <location>
        <position position="201"/>
    </location>
</feature>
<feature type="lipid moiety-binding region" description="N-myristoyl glycine" evidence="18">
    <location>
        <position position="2"/>
    </location>
</feature>
<feature type="lipid moiety-binding region" description="S-palmitoyl cysteine; alternate" evidence="18">
    <location>
        <position position="3"/>
    </location>
</feature>
<feature type="lipid moiety-binding region" description="S-stearoyl cysteine; alternate" evidence="18">
    <location>
        <position position="3"/>
    </location>
</feature>
<feature type="mutagenesis site" description="Cytoplasmic and nucleoplasmic distribution and loss of function." evidence="18">
    <original>G</original>
    <variation>A</variation>
    <location>
        <position position="2"/>
    </location>
</feature>
<feature type="mutagenesis site" description="Endoplasmic reticulum distribution and loss of function." evidence="18">
    <original>C</original>
    <variation>S</variation>
    <location>
        <position position="3"/>
    </location>
</feature>
<feature type="mutagenesis site" description="Loss of phosphorylation." evidence="22 23">
    <original>S</original>
    <variation>A</variation>
    <location>
        <position position="201"/>
    </location>
</feature>
<feature type="mutagenesis site" description="Increased interaction with CIPK23." evidence="22 23">
    <original>S</original>
    <variation>D</variation>
    <location>
        <position position="201"/>
    </location>
</feature>
<accession>O81445</accession>
<accession>O23603</accession>
<gene>
    <name type="primary">CBL1</name>
    <name type="synonym">SCABP5</name>
    <name type="ordered locus">At4g17615</name>
    <name type="ORF">dl4845w</name>
    <name type="ORF">FCAALL.122</name>
</gene>
<proteinExistence type="evidence at protein level"/>
<keyword id="KW-0938">Abscisic acid signaling pathway</keyword>
<keyword id="KW-0025">Alternative splicing</keyword>
<keyword id="KW-0106">Calcium</keyword>
<keyword id="KW-1003">Cell membrane</keyword>
<keyword id="KW-0449">Lipoprotein</keyword>
<keyword id="KW-0472">Membrane</keyword>
<keyword id="KW-0479">Metal-binding</keyword>
<keyword id="KW-0519">Myristate</keyword>
<keyword id="KW-0564">Palmitate</keyword>
<keyword id="KW-0597">Phosphoprotein</keyword>
<keyword id="KW-1185">Reference proteome</keyword>
<keyword id="KW-0677">Repeat</keyword>
<keyword id="KW-0346">Stress response</keyword>
<evidence type="ECO:0000250" key="1"/>
<evidence type="ECO:0000255" key="2"/>
<evidence type="ECO:0000255" key="3">
    <source>
        <dbReference type="PROSITE-ProRule" id="PRU00448"/>
    </source>
</evidence>
<evidence type="ECO:0000269" key="4">
    <source>
    </source>
</evidence>
<evidence type="ECO:0000269" key="5">
    <source>
    </source>
</evidence>
<evidence type="ECO:0000269" key="6">
    <source>
    </source>
</evidence>
<evidence type="ECO:0000269" key="7">
    <source>
    </source>
</evidence>
<evidence type="ECO:0000269" key="8">
    <source>
    </source>
</evidence>
<evidence type="ECO:0000269" key="9">
    <source>
    </source>
</evidence>
<evidence type="ECO:0000269" key="10">
    <source>
    </source>
</evidence>
<evidence type="ECO:0000269" key="11">
    <source>
    </source>
</evidence>
<evidence type="ECO:0000269" key="12">
    <source>
    </source>
</evidence>
<evidence type="ECO:0000269" key="13">
    <source>
    </source>
</evidence>
<evidence type="ECO:0000269" key="14">
    <source>
    </source>
</evidence>
<evidence type="ECO:0000269" key="15">
    <source>
    </source>
</evidence>
<evidence type="ECO:0000269" key="16">
    <source>
    </source>
</evidence>
<evidence type="ECO:0000269" key="17">
    <source>
    </source>
</evidence>
<evidence type="ECO:0000269" key="18">
    <source>
    </source>
</evidence>
<evidence type="ECO:0000269" key="19">
    <source>
    </source>
</evidence>
<evidence type="ECO:0000269" key="20">
    <source>
    </source>
</evidence>
<evidence type="ECO:0000269" key="21">
    <source>
    </source>
</evidence>
<evidence type="ECO:0000269" key="22">
    <source>
    </source>
</evidence>
<evidence type="ECO:0000269" key="23">
    <source>
    </source>
</evidence>
<evidence type="ECO:0000269" key="24">
    <source>
    </source>
</evidence>
<evidence type="ECO:0000269" key="25">
    <source>
    </source>
</evidence>
<evidence type="ECO:0000305" key="26"/>
<evidence type="ECO:0000305" key="27">
    <source>
    </source>
</evidence>
<name>CNBL1_ARATH</name>
<sequence>MGCFHSKAAKEFRGHEDPVKLASETAFSVSEVEALFELFKSISSSVVDDGLINKEEFQLALFKSRKRENIFANRIFDMFDVKRKGVIDFGDFVRSLNVFHPNASLEDKIDFTFRLYDMDCTGYIERQEVKQMLIALLCESEMKLADETIEIILDKTFEDADVNQDGKIDKLEWSDFVNKNPSLLKIMTLPYLRDITTTFPSFVFHSEVDEIAT</sequence>
<dbReference type="EMBL" id="AF076251">
    <property type="protein sequence ID" value="AAC26008.1"/>
    <property type="molecule type" value="mRNA"/>
</dbReference>
<dbReference type="EMBL" id="Z97343">
    <property type="protein sequence ID" value="CAB10542.1"/>
    <property type="status" value="ALT_SEQ"/>
    <property type="molecule type" value="Genomic_DNA"/>
</dbReference>
<dbReference type="EMBL" id="AL161546">
    <property type="protein sequence ID" value="CAB78765.1"/>
    <property type="status" value="ALT_SEQ"/>
    <property type="molecule type" value="Genomic_DNA"/>
</dbReference>
<dbReference type="EMBL" id="CP002687">
    <property type="protein sequence ID" value="AEE83921.1"/>
    <property type="molecule type" value="Genomic_DNA"/>
</dbReference>
<dbReference type="EMBL" id="CP002687">
    <property type="protein sequence ID" value="ANM67719.1"/>
    <property type="molecule type" value="Genomic_DNA"/>
</dbReference>
<dbReference type="EMBL" id="CP002687">
    <property type="protein sequence ID" value="ANM67720.1"/>
    <property type="molecule type" value="Genomic_DNA"/>
</dbReference>
<dbReference type="EMBL" id="AK118798">
    <property type="protein sequence ID" value="BAC43389.1"/>
    <property type="molecule type" value="mRNA"/>
</dbReference>
<dbReference type="EMBL" id="BT005567">
    <property type="protein sequence ID" value="AAO63987.1"/>
    <property type="molecule type" value="mRNA"/>
</dbReference>
<dbReference type="PIR" id="A71446">
    <property type="entry name" value="A71446"/>
</dbReference>
<dbReference type="PIR" id="T51356">
    <property type="entry name" value="T51356"/>
</dbReference>
<dbReference type="RefSeq" id="NP_001329534.1">
    <molecule id="O81445-1"/>
    <property type="nucleotide sequence ID" value="NM_001341238.1"/>
</dbReference>
<dbReference type="RefSeq" id="NP_001329535.1">
    <molecule id="O81445-1"/>
    <property type="nucleotide sequence ID" value="NM_001341237.1"/>
</dbReference>
<dbReference type="RefSeq" id="NP_567533.1">
    <molecule id="O81445-1"/>
    <property type="nucleotide sequence ID" value="NM_117870.4"/>
</dbReference>
<dbReference type="SMR" id="O81445"/>
<dbReference type="BioGRID" id="12774">
    <property type="interactions" value="25"/>
</dbReference>
<dbReference type="DIP" id="DIP-36763N"/>
<dbReference type="FunCoup" id="O81445">
    <property type="interactions" value="927"/>
</dbReference>
<dbReference type="IntAct" id="O81445">
    <property type="interactions" value="19"/>
</dbReference>
<dbReference type="STRING" id="3702.O81445"/>
<dbReference type="iPTMnet" id="O81445"/>
<dbReference type="PaxDb" id="3702-AT4G17615.1"/>
<dbReference type="ProteomicsDB" id="220477">
    <molecule id="O81445-1"/>
</dbReference>
<dbReference type="EnsemblPlants" id="AT4G17615.1">
    <molecule id="O81445-1"/>
    <property type="protein sequence ID" value="AT4G17615.1"/>
    <property type="gene ID" value="AT4G17615"/>
</dbReference>
<dbReference type="EnsemblPlants" id="AT4G17615.4">
    <molecule id="O81445-1"/>
    <property type="protein sequence ID" value="AT4G17615.4"/>
    <property type="gene ID" value="AT4G17615"/>
</dbReference>
<dbReference type="EnsemblPlants" id="AT4G17615.5">
    <molecule id="O81445-1"/>
    <property type="protein sequence ID" value="AT4G17615.5"/>
    <property type="gene ID" value="AT4G17615"/>
</dbReference>
<dbReference type="GeneID" id="827481"/>
<dbReference type="Gramene" id="AT4G17615.1">
    <molecule id="O81445-1"/>
    <property type="protein sequence ID" value="AT4G17615.1"/>
    <property type="gene ID" value="AT4G17615"/>
</dbReference>
<dbReference type="Gramene" id="AT4G17615.4">
    <molecule id="O81445-1"/>
    <property type="protein sequence ID" value="AT4G17615.4"/>
    <property type="gene ID" value="AT4G17615"/>
</dbReference>
<dbReference type="Gramene" id="AT4G17615.5">
    <molecule id="O81445-1"/>
    <property type="protein sequence ID" value="AT4G17615.5"/>
    <property type="gene ID" value="AT4G17615"/>
</dbReference>
<dbReference type="KEGG" id="ath:AT4G17615"/>
<dbReference type="Araport" id="AT4G17615"/>
<dbReference type="TAIR" id="AT4G17615">
    <property type="gene designation" value="CBL1"/>
</dbReference>
<dbReference type="eggNOG" id="KOG0034">
    <property type="taxonomic scope" value="Eukaryota"/>
</dbReference>
<dbReference type="HOGENOM" id="CLU_061288_21_0_1"/>
<dbReference type="InParanoid" id="O81445"/>
<dbReference type="OMA" id="LAMFDCA"/>
<dbReference type="PhylomeDB" id="O81445"/>
<dbReference type="PRO" id="PR:O81445"/>
<dbReference type="Proteomes" id="UP000006548">
    <property type="component" value="Chromosome 4"/>
</dbReference>
<dbReference type="ExpressionAtlas" id="O81445">
    <property type="expression patterns" value="baseline and differential"/>
</dbReference>
<dbReference type="GO" id="GO:0005737">
    <property type="term" value="C:cytoplasm"/>
    <property type="evidence" value="ECO:0000314"/>
    <property type="project" value="TAIR"/>
</dbReference>
<dbReference type="GO" id="GO:0005829">
    <property type="term" value="C:cytosol"/>
    <property type="evidence" value="ECO:0007005"/>
    <property type="project" value="TAIR"/>
</dbReference>
<dbReference type="GO" id="GO:0005886">
    <property type="term" value="C:plasma membrane"/>
    <property type="evidence" value="ECO:0000314"/>
    <property type="project" value="TAIR"/>
</dbReference>
<dbReference type="GO" id="GO:0090406">
    <property type="term" value="C:pollen tube"/>
    <property type="evidence" value="ECO:0000314"/>
    <property type="project" value="TAIR"/>
</dbReference>
<dbReference type="GO" id="GO:0005509">
    <property type="term" value="F:calcium ion binding"/>
    <property type="evidence" value="ECO:0000250"/>
    <property type="project" value="TAIR"/>
</dbReference>
<dbReference type="GO" id="GO:0019900">
    <property type="term" value="F:kinase binding"/>
    <property type="evidence" value="ECO:0000353"/>
    <property type="project" value="UniProtKB"/>
</dbReference>
<dbReference type="GO" id="GO:0009738">
    <property type="term" value="P:abscisic acid-activated signaling pathway"/>
    <property type="evidence" value="ECO:0000304"/>
    <property type="project" value="TAIR"/>
</dbReference>
<dbReference type="GO" id="GO:0019722">
    <property type="term" value="P:calcium-mediated signaling"/>
    <property type="evidence" value="ECO:0000304"/>
    <property type="project" value="TAIR"/>
</dbReference>
<dbReference type="GO" id="GO:0016036">
    <property type="term" value="P:cellular response to phosphate starvation"/>
    <property type="evidence" value="ECO:0000315"/>
    <property type="project" value="TAIR"/>
</dbReference>
<dbReference type="GO" id="GO:0009860">
    <property type="term" value="P:pollen tube growth"/>
    <property type="evidence" value="ECO:0000315"/>
    <property type="project" value="TAIR"/>
</dbReference>
<dbReference type="GO" id="GO:0009409">
    <property type="term" value="P:response to cold"/>
    <property type="evidence" value="ECO:0000270"/>
    <property type="project" value="TAIR"/>
</dbReference>
<dbReference type="GO" id="GO:0006970">
    <property type="term" value="P:response to osmotic stress"/>
    <property type="evidence" value="ECO:0000315"/>
    <property type="project" value="TAIR"/>
</dbReference>
<dbReference type="GO" id="GO:0009651">
    <property type="term" value="P:response to salt stress"/>
    <property type="evidence" value="ECO:0000315"/>
    <property type="project" value="TAIR"/>
</dbReference>
<dbReference type="GO" id="GO:0009414">
    <property type="term" value="P:response to water deprivation"/>
    <property type="evidence" value="ECO:0000315"/>
    <property type="project" value="TAIR"/>
</dbReference>
<dbReference type="CDD" id="cd00051">
    <property type="entry name" value="EFh"/>
    <property type="match status" value="1"/>
</dbReference>
<dbReference type="FunFam" id="1.10.238.10:FF:000073">
    <property type="entry name" value="calcineurin B-like protein 3"/>
    <property type="match status" value="1"/>
</dbReference>
<dbReference type="Gene3D" id="1.10.238.10">
    <property type="entry name" value="EF-hand"/>
    <property type="match status" value="1"/>
</dbReference>
<dbReference type="InterPro" id="IPR045198">
    <property type="entry name" value="CNBL1-10"/>
</dbReference>
<dbReference type="InterPro" id="IPR011992">
    <property type="entry name" value="EF-hand-dom_pair"/>
</dbReference>
<dbReference type="InterPro" id="IPR018247">
    <property type="entry name" value="EF_Hand_1_Ca_BS"/>
</dbReference>
<dbReference type="InterPro" id="IPR002048">
    <property type="entry name" value="EF_hand_dom"/>
</dbReference>
<dbReference type="PANTHER" id="PTHR23056">
    <property type="entry name" value="CALCINEURIN B"/>
    <property type="match status" value="1"/>
</dbReference>
<dbReference type="PANTHER" id="PTHR23056:SF44">
    <property type="entry name" value="CALCINEURIN B-LIKE PROTEIN 1"/>
    <property type="match status" value="1"/>
</dbReference>
<dbReference type="Pfam" id="PF13499">
    <property type="entry name" value="EF-hand_7"/>
    <property type="match status" value="1"/>
</dbReference>
<dbReference type="PRINTS" id="PR00450">
    <property type="entry name" value="RECOVERIN"/>
</dbReference>
<dbReference type="SMART" id="SM00054">
    <property type="entry name" value="EFh"/>
    <property type="match status" value="3"/>
</dbReference>
<dbReference type="SUPFAM" id="SSF47473">
    <property type="entry name" value="EF-hand"/>
    <property type="match status" value="1"/>
</dbReference>
<dbReference type="PROSITE" id="PS00018">
    <property type="entry name" value="EF_HAND_1"/>
    <property type="match status" value="2"/>
</dbReference>
<dbReference type="PROSITE" id="PS50222">
    <property type="entry name" value="EF_HAND_2"/>
    <property type="match status" value="3"/>
</dbReference>
<protein>
    <recommendedName>
        <fullName>Calcineurin B-like protein 1</fullName>
    </recommendedName>
    <alternativeName>
        <fullName>SOS3-like calcium-binding protein 5</fullName>
    </alternativeName>
</protein>